<sequence>MTTEHAAGAQTLNFQAEVKQLLHLMIHSLYSNREIFLRELVSNASDACDKLRFEALDKPELFEGDSELAIRVGFDSEAKTVTVSDNGIGMSRDEVITHLGTIAKSGTKEFFSQLTGDQKKDAHLIGQFGVGFYSAFIVADKVTVVTRRAGLAAAEGVKWECAMTGDAAGEYTVEAIEKAARGTEITLHLREGQEDLLSGWKLRGLIRKYSDHIVQPILMKKEEWDKDKNEQVTTDEDETVNQANALWTRSRNDITEEEYKGFYKHVGHDFDEPLAWTHARVEGRHEYTQLLYIPSHAPFDMWDRNARHGIKLYVKRVFIMDDAEKLMPAYLRFVRGVVDSSDLPLNVSREILQESKDIDTIRSGCTKKVLGLLESLATSDEAADREKYATFWKEFGPVLKEGVGEDFANKDKIAGLLRFASTHADTPDEVVSLADYLARMKEGQDKIYYVTAESFNAAKNSPHLEIFRKKGIEVLLLTDRVDEWVIGNLPEFDGKALVSVAKGGLDLGKLEDEAEKKETEKAADEYKELLEKMKASLGERVKEVRVTHRLTDSPACLVADEHDVGMNLARILKAAGQQAPASKPILEINPQHPAVMRLKYEERQFDDWAAVLFDQALLAEGGTLDDPATFVKRINQLMMAMGGSAGTD</sequence>
<proteinExistence type="inferred from homology"/>
<protein>
    <recommendedName>
        <fullName evidence="1">Chaperone protein HtpG</fullName>
    </recommendedName>
    <alternativeName>
        <fullName evidence="1">Heat shock protein HtpG</fullName>
    </alternativeName>
    <alternativeName>
        <fullName evidence="1">High temperature protein G</fullName>
    </alternativeName>
</protein>
<comment type="function">
    <text evidence="1">Molecular chaperone. Has ATPase activity.</text>
</comment>
<comment type="subunit">
    <text evidence="1">Homodimer.</text>
</comment>
<comment type="subcellular location">
    <subcellularLocation>
        <location evidence="1">Cytoplasm</location>
    </subcellularLocation>
</comment>
<comment type="similarity">
    <text evidence="1">Belongs to the heat shock protein 90 family.</text>
</comment>
<gene>
    <name evidence="1" type="primary">htpG</name>
    <name type="ordered locus">AZOSEA27640</name>
    <name type="ORF">ebA4865</name>
</gene>
<dbReference type="EMBL" id="CR555306">
    <property type="protein sequence ID" value="CAI08889.1"/>
    <property type="molecule type" value="Genomic_DNA"/>
</dbReference>
<dbReference type="RefSeq" id="WP_011238572.1">
    <property type="nucleotide sequence ID" value="NC_006513.1"/>
</dbReference>
<dbReference type="SMR" id="Q5P1C5"/>
<dbReference type="STRING" id="76114.ebA4865"/>
<dbReference type="KEGG" id="eba:ebA4865"/>
<dbReference type="eggNOG" id="COG0326">
    <property type="taxonomic scope" value="Bacteria"/>
</dbReference>
<dbReference type="HOGENOM" id="CLU_006684_3_0_4"/>
<dbReference type="OrthoDB" id="9802640at2"/>
<dbReference type="Proteomes" id="UP000006552">
    <property type="component" value="Chromosome"/>
</dbReference>
<dbReference type="GO" id="GO:0005737">
    <property type="term" value="C:cytoplasm"/>
    <property type="evidence" value="ECO:0007669"/>
    <property type="project" value="UniProtKB-SubCell"/>
</dbReference>
<dbReference type="GO" id="GO:0005524">
    <property type="term" value="F:ATP binding"/>
    <property type="evidence" value="ECO:0007669"/>
    <property type="project" value="UniProtKB-UniRule"/>
</dbReference>
<dbReference type="GO" id="GO:0016887">
    <property type="term" value="F:ATP hydrolysis activity"/>
    <property type="evidence" value="ECO:0007669"/>
    <property type="project" value="InterPro"/>
</dbReference>
<dbReference type="GO" id="GO:0140662">
    <property type="term" value="F:ATP-dependent protein folding chaperone"/>
    <property type="evidence" value="ECO:0007669"/>
    <property type="project" value="InterPro"/>
</dbReference>
<dbReference type="GO" id="GO:0051082">
    <property type="term" value="F:unfolded protein binding"/>
    <property type="evidence" value="ECO:0007669"/>
    <property type="project" value="UniProtKB-UniRule"/>
</dbReference>
<dbReference type="CDD" id="cd16927">
    <property type="entry name" value="HATPase_Hsp90-like"/>
    <property type="match status" value="1"/>
</dbReference>
<dbReference type="FunFam" id="3.30.230.80:FF:000002">
    <property type="entry name" value="Molecular chaperone HtpG"/>
    <property type="match status" value="1"/>
</dbReference>
<dbReference type="FunFam" id="3.30.565.10:FF:000009">
    <property type="entry name" value="Molecular chaperone HtpG"/>
    <property type="match status" value="1"/>
</dbReference>
<dbReference type="Gene3D" id="3.30.230.80">
    <property type="match status" value="1"/>
</dbReference>
<dbReference type="Gene3D" id="3.40.50.11260">
    <property type="match status" value="1"/>
</dbReference>
<dbReference type="Gene3D" id="1.20.120.790">
    <property type="entry name" value="Heat shock protein 90, C-terminal domain"/>
    <property type="match status" value="1"/>
</dbReference>
<dbReference type="Gene3D" id="3.30.565.10">
    <property type="entry name" value="Histidine kinase-like ATPase, C-terminal domain"/>
    <property type="match status" value="1"/>
</dbReference>
<dbReference type="HAMAP" id="MF_00505">
    <property type="entry name" value="HSP90"/>
    <property type="match status" value="1"/>
</dbReference>
<dbReference type="InterPro" id="IPR036890">
    <property type="entry name" value="HATPase_C_sf"/>
</dbReference>
<dbReference type="InterPro" id="IPR019805">
    <property type="entry name" value="Heat_shock_protein_90_CS"/>
</dbReference>
<dbReference type="InterPro" id="IPR037196">
    <property type="entry name" value="HSP90_C"/>
</dbReference>
<dbReference type="InterPro" id="IPR001404">
    <property type="entry name" value="Hsp90_fam"/>
</dbReference>
<dbReference type="InterPro" id="IPR020575">
    <property type="entry name" value="Hsp90_N"/>
</dbReference>
<dbReference type="InterPro" id="IPR020568">
    <property type="entry name" value="Ribosomal_Su5_D2-typ_SF"/>
</dbReference>
<dbReference type="NCBIfam" id="NF003555">
    <property type="entry name" value="PRK05218.1"/>
    <property type="match status" value="1"/>
</dbReference>
<dbReference type="PANTHER" id="PTHR11528">
    <property type="entry name" value="HEAT SHOCK PROTEIN 90 FAMILY MEMBER"/>
    <property type="match status" value="1"/>
</dbReference>
<dbReference type="Pfam" id="PF13589">
    <property type="entry name" value="HATPase_c_3"/>
    <property type="match status" value="1"/>
</dbReference>
<dbReference type="Pfam" id="PF00183">
    <property type="entry name" value="HSP90"/>
    <property type="match status" value="1"/>
</dbReference>
<dbReference type="PIRSF" id="PIRSF002583">
    <property type="entry name" value="Hsp90"/>
    <property type="match status" value="1"/>
</dbReference>
<dbReference type="PRINTS" id="PR00775">
    <property type="entry name" value="HEATSHOCK90"/>
</dbReference>
<dbReference type="SMART" id="SM00387">
    <property type="entry name" value="HATPase_c"/>
    <property type="match status" value="1"/>
</dbReference>
<dbReference type="SUPFAM" id="SSF55874">
    <property type="entry name" value="ATPase domain of HSP90 chaperone/DNA topoisomerase II/histidine kinase"/>
    <property type="match status" value="1"/>
</dbReference>
<dbReference type="SUPFAM" id="SSF110942">
    <property type="entry name" value="HSP90 C-terminal domain"/>
    <property type="match status" value="1"/>
</dbReference>
<dbReference type="SUPFAM" id="SSF54211">
    <property type="entry name" value="Ribosomal protein S5 domain 2-like"/>
    <property type="match status" value="1"/>
</dbReference>
<dbReference type="PROSITE" id="PS00298">
    <property type="entry name" value="HSP90"/>
    <property type="match status" value="1"/>
</dbReference>
<reference key="1">
    <citation type="journal article" date="2005" name="Arch. Microbiol.">
        <title>The genome sequence of an anaerobic aromatic-degrading denitrifying bacterium, strain EbN1.</title>
        <authorList>
            <person name="Rabus R."/>
            <person name="Kube M."/>
            <person name="Heider J."/>
            <person name="Beck A."/>
            <person name="Heitmann K."/>
            <person name="Widdel F."/>
            <person name="Reinhardt R."/>
        </authorList>
    </citation>
    <scope>NUCLEOTIDE SEQUENCE [LARGE SCALE GENOMIC DNA]</scope>
    <source>
        <strain>DSM 19018 / LMG 30748 / EbN1</strain>
    </source>
</reference>
<organism>
    <name type="scientific">Aromatoleum aromaticum (strain DSM 19018 / LMG 30748 / EbN1)</name>
    <name type="common">Azoarcus sp. (strain EbN1)</name>
    <dbReference type="NCBI Taxonomy" id="76114"/>
    <lineage>
        <taxon>Bacteria</taxon>
        <taxon>Pseudomonadati</taxon>
        <taxon>Pseudomonadota</taxon>
        <taxon>Betaproteobacteria</taxon>
        <taxon>Rhodocyclales</taxon>
        <taxon>Rhodocyclaceae</taxon>
        <taxon>Aromatoleum</taxon>
    </lineage>
</organism>
<evidence type="ECO:0000255" key="1">
    <source>
        <dbReference type="HAMAP-Rule" id="MF_00505"/>
    </source>
</evidence>
<accession>Q5P1C5</accession>
<feature type="chain" id="PRO_0000224195" description="Chaperone protein HtpG">
    <location>
        <begin position="1"/>
        <end position="648"/>
    </location>
</feature>
<feature type="region of interest" description="A; substrate-binding" evidence="1">
    <location>
        <begin position="1"/>
        <end position="349"/>
    </location>
</feature>
<feature type="region of interest" description="B" evidence="1">
    <location>
        <begin position="350"/>
        <end position="570"/>
    </location>
</feature>
<feature type="region of interest" description="C" evidence="1">
    <location>
        <begin position="571"/>
        <end position="648"/>
    </location>
</feature>
<name>HTPG_AROAE</name>
<keyword id="KW-0067">ATP-binding</keyword>
<keyword id="KW-0143">Chaperone</keyword>
<keyword id="KW-0963">Cytoplasm</keyword>
<keyword id="KW-0547">Nucleotide-binding</keyword>
<keyword id="KW-1185">Reference proteome</keyword>
<keyword id="KW-0346">Stress response</keyword>